<evidence type="ECO:0000250" key="1"/>
<evidence type="ECO:0000256" key="2">
    <source>
        <dbReference type="SAM" id="MobiDB-lite"/>
    </source>
</evidence>
<evidence type="ECO:0000305" key="3"/>
<keyword id="KW-0145">Chemotaxis</keyword>
<keyword id="KW-0963">Cytoplasm</keyword>
<keyword id="KW-0283">Flagellar rotation</keyword>
<keyword id="KW-0378">Hydrolase</keyword>
<keyword id="KW-0904">Protein phosphatase</keyword>
<keyword id="KW-1185">Reference proteome</keyword>
<reference key="1">
    <citation type="journal article" date="2002" name="Nucleic Acids Res.">
        <title>Genome sequence of Shigella flexneri 2a: insights into pathogenicity through comparison with genomes of Escherichia coli K12 and O157.</title>
        <authorList>
            <person name="Jin Q."/>
            <person name="Yuan Z."/>
            <person name="Xu J."/>
            <person name="Wang Y."/>
            <person name="Shen Y."/>
            <person name="Lu W."/>
            <person name="Wang J."/>
            <person name="Liu H."/>
            <person name="Yang J."/>
            <person name="Yang F."/>
            <person name="Zhang X."/>
            <person name="Zhang J."/>
            <person name="Yang G."/>
            <person name="Wu H."/>
            <person name="Qu D."/>
            <person name="Dong J."/>
            <person name="Sun L."/>
            <person name="Xue Y."/>
            <person name="Zhao A."/>
            <person name="Gao Y."/>
            <person name="Zhu J."/>
            <person name="Kan B."/>
            <person name="Ding K."/>
            <person name="Chen S."/>
            <person name="Cheng H."/>
            <person name="Yao Z."/>
            <person name="He B."/>
            <person name="Chen R."/>
            <person name="Ma D."/>
            <person name="Qiang B."/>
            <person name="Wen Y."/>
            <person name="Hou Y."/>
            <person name="Yu J."/>
        </authorList>
    </citation>
    <scope>NUCLEOTIDE SEQUENCE [LARGE SCALE GENOMIC DNA]</scope>
    <source>
        <strain>301 / Serotype 2a</strain>
    </source>
</reference>
<reference key="2">
    <citation type="journal article" date="2003" name="Infect. Immun.">
        <title>Complete genome sequence and comparative genomics of Shigella flexneri serotype 2a strain 2457T.</title>
        <authorList>
            <person name="Wei J."/>
            <person name="Goldberg M.B."/>
            <person name="Burland V."/>
            <person name="Venkatesan M.M."/>
            <person name="Deng W."/>
            <person name="Fournier G."/>
            <person name="Mayhew G.F."/>
            <person name="Plunkett G. III"/>
            <person name="Rose D.J."/>
            <person name="Darling A."/>
            <person name="Mau B."/>
            <person name="Perna N.T."/>
            <person name="Payne S.M."/>
            <person name="Runyen-Janecky L.J."/>
            <person name="Zhou S."/>
            <person name="Schwartz D.C."/>
            <person name="Blattner F.R."/>
        </authorList>
    </citation>
    <scope>NUCLEOTIDE SEQUENCE [LARGE SCALE GENOMIC DNA]</scope>
    <source>
        <strain>ATCC 700930 / 2457T / Serotype 2a</strain>
    </source>
</reference>
<organism>
    <name type="scientific">Shigella flexneri</name>
    <dbReference type="NCBI Taxonomy" id="623"/>
    <lineage>
        <taxon>Bacteria</taxon>
        <taxon>Pseudomonadati</taxon>
        <taxon>Pseudomonadota</taxon>
        <taxon>Gammaproteobacteria</taxon>
        <taxon>Enterobacterales</taxon>
        <taxon>Enterobacteriaceae</taxon>
        <taxon>Shigella</taxon>
    </lineage>
</organism>
<protein>
    <recommendedName>
        <fullName>Protein phosphatase CheZ</fullName>
        <ecNumber>3.1.3.-</ecNumber>
    </recommendedName>
    <alternativeName>
        <fullName>Chemotaxis protein CheZ</fullName>
    </alternativeName>
</protein>
<comment type="function">
    <text evidence="1">Plays an important role in bacterial chemotaxis signal transduction pathway by accelerating the dephosphorylation of phosphorylated CheY (CheY-P).</text>
</comment>
<comment type="subunit">
    <text evidence="1">Homodimer.</text>
</comment>
<comment type="subcellular location">
    <subcellularLocation>
        <location evidence="1">Cytoplasm</location>
    </subcellularLocation>
</comment>
<comment type="similarity">
    <text evidence="3">Belongs to the CheZ family.</text>
</comment>
<proteinExistence type="inferred from homology"/>
<accession>Q83R53</accession>
<accession>Q7UAB8</accession>
<name>CHEZ_SHIFL</name>
<sequence length="214" mass="23941">MMQPSIKPADEHSAGDIIARIGSLTHMLRDSLRELGLVQAIAEAAEAIPDARDRLYYVVQMTAQAAERALNSVEASQPHQDQMEKSAKALTQRWDDWFADPIDLADARELVTDTRQFLADVPAHTSFTNAQLLEIMMAQDFQDLTGQVIKRMMDVIQEIERQLLMVLLENIPEQESRPKRENQSLLNGPQVDTSKAGVVASQDQVDDLLDSLGF</sequence>
<dbReference type="EC" id="3.1.3.-"/>
<dbReference type="EMBL" id="AE005674">
    <property type="protein sequence ID" value="AAN43483.2"/>
    <property type="molecule type" value="Genomic_DNA"/>
</dbReference>
<dbReference type="EMBL" id="AE014073">
    <property type="protein sequence ID" value="AAP17313.1"/>
    <property type="molecule type" value="Genomic_DNA"/>
</dbReference>
<dbReference type="RefSeq" id="NP_707776.2">
    <property type="nucleotide sequence ID" value="NC_004337.2"/>
</dbReference>
<dbReference type="RefSeq" id="WP_000983598.1">
    <property type="nucleotide sequence ID" value="NZ_WPGW01000105.1"/>
</dbReference>
<dbReference type="SMR" id="Q83R53"/>
<dbReference type="STRING" id="198214.SF1930"/>
<dbReference type="PaxDb" id="198214-SF1930"/>
<dbReference type="GeneID" id="1025145"/>
<dbReference type="KEGG" id="sfl:SF1930"/>
<dbReference type="KEGG" id="sfx:S2021"/>
<dbReference type="PATRIC" id="fig|198214.7.peg.2305"/>
<dbReference type="HOGENOM" id="CLU_080718_1_0_6"/>
<dbReference type="Proteomes" id="UP000001006">
    <property type="component" value="Chromosome"/>
</dbReference>
<dbReference type="Proteomes" id="UP000002673">
    <property type="component" value="Chromosome"/>
</dbReference>
<dbReference type="GO" id="GO:0009288">
    <property type="term" value="C:bacterial-type flagellum"/>
    <property type="evidence" value="ECO:0007669"/>
    <property type="project" value="InterPro"/>
</dbReference>
<dbReference type="GO" id="GO:0005737">
    <property type="term" value="C:cytoplasm"/>
    <property type="evidence" value="ECO:0007669"/>
    <property type="project" value="UniProtKB-SubCell"/>
</dbReference>
<dbReference type="GO" id="GO:0004721">
    <property type="term" value="F:phosphoprotein phosphatase activity"/>
    <property type="evidence" value="ECO:0007669"/>
    <property type="project" value="UniProtKB-KW"/>
</dbReference>
<dbReference type="GO" id="GO:0097588">
    <property type="term" value="P:archaeal or bacterial-type flagellum-dependent cell motility"/>
    <property type="evidence" value="ECO:0007669"/>
    <property type="project" value="UniProtKB-KW"/>
</dbReference>
<dbReference type="GO" id="GO:0006935">
    <property type="term" value="P:chemotaxis"/>
    <property type="evidence" value="ECO:0007669"/>
    <property type="project" value="UniProtKB-KW"/>
</dbReference>
<dbReference type="GO" id="GO:0050920">
    <property type="term" value="P:regulation of chemotaxis"/>
    <property type="evidence" value="ECO:0007669"/>
    <property type="project" value="InterPro"/>
</dbReference>
<dbReference type="FunFam" id="1.10.287.500:FF:000001">
    <property type="entry name" value="Protein phosphatase CheZ"/>
    <property type="match status" value="1"/>
</dbReference>
<dbReference type="Gene3D" id="1.10.287.500">
    <property type="entry name" value="Helix hairpin bin"/>
    <property type="match status" value="1"/>
</dbReference>
<dbReference type="Gene3D" id="1.20.5.590">
    <property type="entry name" value="Single helix bin"/>
    <property type="match status" value="1"/>
</dbReference>
<dbReference type="InterPro" id="IPR007439">
    <property type="entry name" value="Chemotax_Pase_CheZ"/>
</dbReference>
<dbReference type="InterPro" id="IPR050992">
    <property type="entry name" value="CheZ_family_phosphatases"/>
</dbReference>
<dbReference type="NCBIfam" id="NF008368">
    <property type="entry name" value="PRK11166.1"/>
    <property type="match status" value="1"/>
</dbReference>
<dbReference type="PANTHER" id="PTHR43693">
    <property type="entry name" value="PROTEIN PHOSPHATASE CHEZ"/>
    <property type="match status" value="1"/>
</dbReference>
<dbReference type="PANTHER" id="PTHR43693:SF1">
    <property type="entry name" value="PROTEIN PHOSPHATASE CHEZ"/>
    <property type="match status" value="1"/>
</dbReference>
<dbReference type="Pfam" id="PF04344">
    <property type="entry name" value="CheZ"/>
    <property type="match status" value="1"/>
</dbReference>
<dbReference type="PIRSF" id="PIRSF002884">
    <property type="entry name" value="CheZ"/>
    <property type="match status" value="1"/>
</dbReference>
<dbReference type="SUPFAM" id="SSF75708">
    <property type="entry name" value="Chemotaxis phosphatase CheZ"/>
    <property type="match status" value="1"/>
</dbReference>
<feature type="chain" id="PRO_0000410784" description="Protein phosphatase CheZ">
    <location>
        <begin position="1"/>
        <end position="214"/>
    </location>
</feature>
<feature type="region of interest" description="Disordered" evidence="2">
    <location>
        <begin position="174"/>
        <end position="199"/>
    </location>
</feature>
<feature type="compositionally biased region" description="Polar residues" evidence="2">
    <location>
        <begin position="183"/>
        <end position="193"/>
    </location>
</feature>
<feature type="site" description="Enhances dephosphorylation of CheY-P" evidence="1">
    <location>
        <position position="147"/>
    </location>
</feature>
<gene>
    <name type="primary">cheZ</name>
    <name type="ordered locus">SF1930</name>
    <name type="ordered locus">S2021</name>
</gene>